<reference evidence="5" key="1">
    <citation type="journal article" date="2009" name="BMC Evol. Biol.">
        <title>A proteomic approach for studying insect phylogeny: CAPA peptides of ancient insect taxa (Dictyoptera, Blattoptera) as a test case.</title>
        <authorList>
            <person name="Roth S."/>
            <person name="Fromm B."/>
            <person name="Gaede G."/>
            <person name="Predel R."/>
        </authorList>
    </citation>
    <scope>PROTEIN SEQUENCE</scope>
    <scope>PYROGLUTAMATE FORMATION AT GLN-1</scope>
    <scope>AMIDATION AT THR-10</scope>
    <source>
        <tissue evidence="3">Corpora cardiaca</tissue>
    </source>
</reference>
<accession>P85549</accession>
<dbReference type="GO" id="GO:0005576">
    <property type="term" value="C:extracellular region"/>
    <property type="evidence" value="ECO:0007669"/>
    <property type="project" value="UniProtKB-SubCell"/>
</dbReference>
<dbReference type="GO" id="GO:0005179">
    <property type="term" value="F:hormone activity"/>
    <property type="evidence" value="ECO:0007669"/>
    <property type="project" value="UniProtKB-KW"/>
</dbReference>
<dbReference type="GO" id="GO:0007218">
    <property type="term" value="P:neuropeptide signaling pathway"/>
    <property type="evidence" value="ECO:0007669"/>
    <property type="project" value="UniProtKB-KW"/>
</dbReference>
<dbReference type="InterPro" id="IPR002047">
    <property type="entry name" value="Adipokinetic_hormone_CS"/>
</dbReference>
<dbReference type="PROSITE" id="PS00256">
    <property type="entry name" value="AKH"/>
    <property type="match status" value="1"/>
</dbReference>
<name>HTF_BLADU</name>
<evidence type="ECO:0000250" key="1">
    <source>
        <dbReference type="UniProtKB" id="P67790"/>
    </source>
</evidence>
<evidence type="ECO:0000255" key="2"/>
<evidence type="ECO:0000269" key="3">
    <source>
    </source>
</evidence>
<evidence type="ECO:0000303" key="4">
    <source>
    </source>
</evidence>
<evidence type="ECO:0000305" key="5"/>
<feature type="peptide" id="PRO_0000378635" description="Hypertrehalosaemic factor" evidence="3">
    <location>
        <begin position="1"/>
        <end position="10"/>
    </location>
</feature>
<feature type="modified residue" description="Pyrrolidone carboxylic acid" evidence="3">
    <location>
        <position position="1"/>
    </location>
</feature>
<feature type="modified residue" description="Threonine amide" evidence="3">
    <location>
        <position position="10"/>
    </location>
</feature>
<comment type="function">
    <text evidence="5">Hypertrehalosaemic factors are neuropeptides that elevate the level of trehalose in the hemolymph (trehalose is the major carbohydrate in the hemolymph of insects).</text>
</comment>
<comment type="subcellular location">
    <subcellularLocation>
        <location evidence="5">Secreted</location>
    </subcellularLocation>
</comment>
<comment type="similarity">
    <text evidence="2">Belongs to the AKH/HRTH/RPCH family.</text>
</comment>
<protein>
    <recommendedName>
        <fullName evidence="1">Hypertrehalosaemic factor</fullName>
    </recommendedName>
    <alternativeName>
        <fullName evidence="4">Adipokinetic hormone 1</fullName>
        <shortName evidence="4">BlaDu-AKH-1</shortName>
    </alternativeName>
    <alternativeName>
        <fullName evidence="1">Hypertrehalosaemic neuropeptide</fullName>
    </alternativeName>
</protein>
<organism>
    <name type="scientific">Blaptica dubia</name>
    <name type="common">Argentinian wood cockroach</name>
    <dbReference type="NCBI Taxonomy" id="132935"/>
    <lineage>
        <taxon>Eukaryota</taxon>
        <taxon>Metazoa</taxon>
        <taxon>Ecdysozoa</taxon>
        <taxon>Arthropoda</taxon>
        <taxon>Hexapoda</taxon>
        <taxon>Insecta</taxon>
        <taxon>Pterygota</taxon>
        <taxon>Neoptera</taxon>
        <taxon>Polyneoptera</taxon>
        <taxon>Dictyoptera</taxon>
        <taxon>Blattodea</taxon>
        <taxon>Blaberoidea</taxon>
        <taxon>Blaberidae</taxon>
        <taxon>Blaberinae</taxon>
        <taxon>Blaptica</taxon>
    </lineage>
</organism>
<keyword id="KW-0027">Amidation</keyword>
<keyword id="KW-0903">Direct protein sequencing</keyword>
<keyword id="KW-0372">Hormone</keyword>
<keyword id="KW-0527">Neuropeptide</keyword>
<keyword id="KW-0873">Pyrrolidone carboxylic acid</keyword>
<keyword id="KW-0964">Secreted</keyword>
<proteinExistence type="evidence at protein level"/>
<sequence>QVNFSPGWGT</sequence>